<sequence>MTNIRKSHPLLKIINHSFIDLPTPSNISSWWNFGSLLGICLILQIATGLFLAMHYTSDTTTAFSSVTHICRDVNYGWLIRYLHANGASMFFICLFIHVGRGMYYGSYMSIETWNMGIILLFTVMATAFMGYVLPWGQMSFWGATVITNLLSAIPYIGTTLVEWIWGGFSVDKATLTRFFAFHFILPFIIVALVMVHLLFLHETGSNNPSGLNSDADKIPFHPYYTIKDILGVLLLLLFLISLVLFTPDLLGDPDNYIPANPLNTPPHIKPEWYFLFAYAILRSIPNKLGGVLALILSILVLALLPHLHTSKLQSLMFRPLTQTLYWILVADLLTLTWIGGQPVEYPFIIIGQLASVLYFAIILIFMPMAGMIEDNMLKMD</sequence>
<proteinExistence type="inferred from homology"/>
<dbReference type="EMBL" id="AF160567">
    <property type="protein sequence ID" value="AAF15183.1"/>
    <property type="molecule type" value="Genomic_DNA"/>
</dbReference>
<dbReference type="EMBL" id="AF160568">
    <property type="protein sequence ID" value="AAF15184.1"/>
    <property type="molecule type" value="Genomic_DNA"/>
</dbReference>
<dbReference type="SMR" id="Q9T7Q9"/>
<dbReference type="GO" id="GO:0005743">
    <property type="term" value="C:mitochondrial inner membrane"/>
    <property type="evidence" value="ECO:0007669"/>
    <property type="project" value="UniProtKB-SubCell"/>
</dbReference>
<dbReference type="GO" id="GO:0045275">
    <property type="term" value="C:respiratory chain complex III"/>
    <property type="evidence" value="ECO:0007669"/>
    <property type="project" value="InterPro"/>
</dbReference>
<dbReference type="GO" id="GO:0046872">
    <property type="term" value="F:metal ion binding"/>
    <property type="evidence" value="ECO:0007669"/>
    <property type="project" value="UniProtKB-KW"/>
</dbReference>
<dbReference type="GO" id="GO:0008121">
    <property type="term" value="F:ubiquinol-cytochrome-c reductase activity"/>
    <property type="evidence" value="ECO:0007669"/>
    <property type="project" value="InterPro"/>
</dbReference>
<dbReference type="GO" id="GO:0006122">
    <property type="term" value="P:mitochondrial electron transport, ubiquinol to cytochrome c"/>
    <property type="evidence" value="ECO:0007669"/>
    <property type="project" value="TreeGrafter"/>
</dbReference>
<dbReference type="CDD" id="cd00290">
    <property type="entry name" value="cytochrome_b_C"/>
    <property type="match status" value="1"/>
</dbReference>
<dbReference type="CDD" id="cd00284">
    <property type="entry name" value="Cytochrome_b_N"/>
    <property type="match status" value="1"/>
</dbReference>
<dbReference type="FunFam" id="1.20.810.10:FF:000002">
    <property type="entry name" value="Cytochrome b"/>
    <property type="match status" value="1"/>
</dbReference>
<dbReference type="Gene3D" id="1.20.810.10">
    <property type="entry name" value="Cytochrome Bc1 Complex, Chain C"/>
    <property type="match status" value="1"/>
</dbReference>
<dbReference type="InterPro" id="IPR005798">
    <property type="entry name" value="Cyt_b/b6_C"/>
</dbReference>
<dbReference type="InterPro" id="IPR036150">
    <property type="entry name" value="Cyt_b/b6_C_sf"/>
</dbReference>
<dbReference type="InterPro" id="IPR005797">
    <property type="entry name" value="Cyt_b/b6_N"/>
</dbReference>
<dbReference type="InterPro" id="IPR027387">
    <property type="entry name" value="Cytb/b6-like_sf"/>
</dbReference>
<dbReference type="InterPro" id="IPR030689">
    <property type="entry name" value="Cytochrome_b"/>
</dbReference>
<dbReference type="InterPro" id="IPR048260">
    <property type="entry name" value="Cytochrome_b_C_euk/bac"/>
</dbReference>
<dbReference type="InterPro" id="IPR048259">
    <property type="entry name" value="Cytochrome_b_N_euk/bac"/>
</dbReference>
<dbReference type="InterPro" id="IPR016174">
    <property type="entry name" value="Di-haem_cyt_TM"/>
</dbReference>
<dbReference type="PANTHER" id="PTHR19271">
    <property type="entry name" value="CYTOCHROME B"/>
    <property type="match status" value="1"/>
</dbReference>
<dbReference type="PANTHER" id="PTHR19271:SF16">
    <property type="entry name" value="CYTOCHROME B"/>
    <property type="match status" value="1"/>
</dbReference>
<dbReference type="Pfam" id="PF00032">
    <property type="entry name" value="Cytochrom_B_C"/>
    <property type="match status" value="1"/>
</dbReference>
<dbReference type="Pfam" id="PF00033">
    <property type="entry name" value="Cytochrome_B"/>
    <property type="match status" value="1"/>
</dbReference>
<dbReference type="PIRSF" id="PIRSF038885">
    <property type="entry name" value="COB"/>
    <property type="match status" value="1"/>
</dbReference>
<dbReference type="SUPFAM" id="SSF81648">
    <property type="entry name" value="a domain/subunit of cytochrome bc1 complex (Ubiquinol-cytochrome c reductase)"/>
    <property type="match status" value="1"/>
</dbReference>
<dbReference type="SUPFAM" id="SSF81342">
    <property type="entry name" value="Transmembrane di-heme cytochromes"/>
    <property type="match status" value="1"/>
</dbReference>
<dbReference type="PROSITE" id="PS51003">
    <property type="entry name" value="CYTB_CTER"/>
    <property type="match status" value="1"/>
</dbReference>
<dbReference type="PROSITE" id="PS51002">
    <property type="entry name" value="CYTB_NTER"/>
    <property type="match status" value="1"/>
</dbReference>
<name>CYB_ELIMY</name>
<comment type="function">
    <text evidence="2">Component of the ubiquinol-cytochrome c reductase complex (complex III or cytochrome b-c1 complex) that is part of the mitochondrial respiratory chain. The b-c1 complex mediates electron transfer from ubiquinol to cytochrome c. Contributes to the generation of a proton gradient across the mitochondrial membrane that is then used for ATP synthesis.</text>
</comment>
<comment type="cofactor">
    <cofactor evidence="2">
        <name>heme b</name>
        <dbReference type="ChEBI" id="CHEBI:60344"/>
    </cofactor>
    <text evidence="2">Binds 2 heme b groups non-covalently.</text>
</comment>
<comment type="subunit">
    <text evidence="2">The cytochrome bc1 complex contains 11 subunits: 3 respiratory subunits (MT-CYB, CYC1 and UQCRFS1), 2 core proteins (UQCRC1 and UQCRC2) and 6 low-molecular weight proteins (UQCRH/QCR6, UQCRB/QCR7, UQCRQ/QCR8, UQCR10/QCR9, UQCR11/QCR10 and a cleavage product of UQCRFS1). This cytochrome bc1 complex then forms a dimer.</text>
</comment>
<comment type="subcellular location">
    <subcellularLocation>
        <location evidence="2">Mitochondrion inner membrane</location>
        <topology evidence="2">Multi-pass membrane protein</topology>
    </subcellularLocation>
</comment>
<comment type="miscellaneous">
    <text evidence="1">Heme 1 (or BL or b562) is low-potential and absorbs at about 562 nm, and heme 2 (or BH or b566) is high-potential and absorbs at about 566 nm.</text>
</comment>
<comment type="similarity">
    <text evidence="3 4">Belongs to the cytochrome b family.</text>
</comment>
<comment type="caution">
    <text evidence="2">The full-length protein contains only eight transmembrane helices, not nine as predicted by bioinformatics tools.</text>
</comment>
<organism>
    <name type="scientific">Eliurus myoxinus</name>
    <name type="common">Dormouse tufted-tailed rat</name>
    <dbReference type="NCBI Taxonomy" id="107285"/>
    <lineage>
        <taxon>Eukaryota</taxon>
        <taxon>Metazoa</taxon>
        <taxon>Chordata</taxon>
        <taxon>Craniata</taxon>
        <taxon>Vertebrata</taxon>
        <taxon>Euteleostomi</taxon>
        <taxon>Mammalia</taxon>
        <taxon>Eutheria</taxon>
        <taxon>Euarchontoglires</taxon>
        <taxon>Glires</taxon>
        <taxon>Rodentia</taxon>
        <taxon>Myomorpha</taxon>
        <taxon>Muroidea</taxon>
        <taxon>Nesomyidae</taxon>
        <taxon>Nesomyinae</taxon>
        <taxon>Eliurus</taxon>
    </lineage>
</organism>
<protein>
    <recommendedName>
        <fullName>Cytochrome b</fullName>
    </recommendedName>
    <alternativeName>
        <fullName>Complex III subunit 3</fullName>
    </alternativeName>
    <alternativeName>
        <fullName>Complex III subunit III</fullName>
    </alternativeName>
    <alternativeName>
        <fullName>Cytochrome b-c1 complex subunit 3</fullName>
    </alternativeName>
    <alternativeName>
        <fullName>Ubiquinol-cytochrome-c reductase complex cytochrome b subunit</fullName>
    </alternativeName>
</protein>
<keyword id="KW-0249">Electron transport</keyword>
<keyword id="KW-0349">Heme</keyword>
<keyword id="KW-0408">Iron</keyword>
<keyword id="KW-0472">Membrane</keyword>
<keyword id="KW-0479">Metal-binding</keyword>
<keyword id="KW-0496">Mitochondrion</keyword>
<keyword id="KW-0999">Mitochondrion inner membrane</keyword>
<keyword id="KW-0679">Respiratory chain</keyword>
<keyword id="KW-0812">Transmembrane</keyword>
<keyword id="KW-1133">Transmembrane helix</keyword>
<keyword id="KW-0813">Transport</keyword>
<keyword id="KW-0830">Ubiquinone</keyword>
<reference key="1">
    <citation type="journal article" date="1999" name="Cladistics">
        <title>Molecular phylogeny and biogeography of Madagascar's native rodents (Muridae: Nesomyinae): a test of the single origin hypothesis.</title>
        <authorList>
            <person name="Jansa S.A."/>
            <person name="Goodman S.M."/>
            <person name="Tucker P.K."/>
        </authorList>
    </citation>
    <scope>NUCLEOTIDE SEQUENCE [GENOMIC DNA]</scope>
    <source>
        <strain>Isolate Emyo384</strain>
        <strain>Isolate Emyo385</strain>
    </source>
</reference>
<gene>
    <name type="primary">MT-CYB</name>
    <name type="synonym">COB</name>
    <name type="synonym">CYTB</name>
    <name type="synonym">MTCYB</name>
</gene>
<accession>Q9T7Q9</accession>
<accession>Q9T7R0</accession>
<geneLocation type="mitochondrion"/>
<feature type="chain" id="PRO_0000060915" description="Cytochrome b">
    <location>
        <begin position="1"/>
        <end position="380"/>
    </location>
</feature>
<feature type="transmembrane region" description="Helical" evidence="2">
    <location>
        <begin position="33"/>
        <end position="53"/>
    </location>
</feature>
<feature type="transmembrane region" description="Helical" evidence="2">
    <location>
        <begin position="77"/>
        <end position="98"/>
    </location>
</feature>
<feature type="transmembrane region" description="Helical" evidence="2">
    <location>
        <begin position="113"/>
        <end position="133"/>
    </location>
</feature>
<feature type="transmembrane region" description="Helical" evidence="2">
    <location>
        <begin position="178"/>
        <end position="198"/>
    </location>
</feature>
<feature type="transmembrane region" description="Helical" evidence="2">
    <location>
        <begin position="226"/>
        <end position="246"/>
    </location>
</feature>
<feature type="transmembrane region" description="Helical" evidence="2">
    <location>
        <begin position="288"/>
        <end position="308"/>
    </location>
</feature>
<feature type="transmembrane region" description="Helical" evidence="2">
    <location>
        <begin position="320"/>
        <end position="340"/>
    </location>
</feature>
<feature type="transmembrane region" description="Helical" evidence="2">
    <location>
        <begin position="347"/>
        <end position="367"/>
    </location>
</feature>
<feature type="binding site" description="axial binding residue" evidence="2">
    <location>
        <position position="83"/>
    </location>
    <ligand>
        <name>heme b</name>
        <dbReference type="ChEBI" id="CHEBI:60344"/>
        <label>b562</label>
    </ligand>
    <ligandPart>
        <name>Fe</name>
        <dbReference type="ChEBI" id="CHEBI:18248"/>
    </ligandPart>
</feature>
<feature type="binding site" description="axial binding residue" evidence="2">
    <location>
        <position position="97"/>
    </location>
    <ligand>
        <name>heme b</name>
        <dbReference type="ChEBI" id="CHEBI:60344"/>
        <label>b566</label>
    </ligand>
    <ligandPart>
        <name>Fe</name>
        <dbReference type="ChEBI" id="CHEBI:18248"/>
    </ligandPart>
</feature>
<feature type="binding site" description="axial binding residue" evidence="2">
    <location>
        <position position="182"/>
    </location>
    <ligand>
        <name>heme b</name>
        <dbReference type="ChEBI" id="CHEBI:60344"/>
        <label>b562</label>
    </ligand>
    <ligandPart>
        <name>Fe</name>
        <dbReference type="ChEBI" id="CHEBI:18248"/>
    </ligandPart>
</feature>
<feature type="binding site" description="axial binding residue" evidence="2">
    <location>
        <position position="196"/>
    </location>
    <ligand>
        <name>heme b</name>
        <dbReference type="ChEBI" id="CHEBI:60344"/>
        <label>b566</label>
    </ligand>
    <ligandPart>
        <name>Fe</name>
        <dbReference type="ChEBI" id="CHEBI:18248"/>
    </ligandPart>
</feature>
<feature type="binding site" evidence="2">
    <location>
        <position position="201"/>
    </location>
    <ligand>
        <name>a ubiquinone</name>
        <dbReference type="ChEBI" id="CHEBI:16389"/>
    </ligand>
</feature>
<feature type="sequence variant" description="In strain: Isolate Emyo384.">
    <original>T</original>
    <variation>A</variation>
    <location>
        <position position="334"/>
    </location>
</feature>
<evidence type="ECO:0000250" key="1"/>
<evidence type="ECO:0000250" key="2">
    <source>
        <dbReference type="UniProtKB" id="P00157"/>
    </source>
</evidence>
<evidence type="ECO:0000255" key="3">
    <source>
        <dbReference type="PROSITE-ProRule" id="PRU00967"/>
    </source>
</evidence>
<evidence type="ECO:0000255" key="4">
    <source>
        <dbReference type="PROSITE-ProRule" id="PRU00968"/>
    </source>
</evidence>